<accession>P0A6E5</accession>
<accession>P22767</accession>
<evidence type="ECO:0000250" key="1"/>
<evidence type="ECO:0000305" key="2"/>
<keyword id="KW-0028">Amino-acid biosynthesis</keyword>
<keyword id="KW-0055">Arginine biosynthesis</keyword>
<keyword id="KW-0067">ATP-binding</keyword>
<keyword id="KW-0963">Cytoplasm</keyword>
<keyword id="KW-0436">Ligase</keyword>
<keyword id="KW-0547">Nucleotide-binding</keyword>
<keyword id="KW-1185">Reference proteome</keyword>
<comment type="catalytic activity">
    <reaction>
        <text>L-citrulline + L-aspartate + ATP = 2-(N(omega)-L-arginino)succinate + AMP + diphosphate + H(+)</text>
        <dbReference type="Rhea" id="RHEA:10932"/>
        <dbReference type="ChEBI" id="CHEBI:15378"/>
        <dbReference type="ChEBI" id="CHEBI:29991"/>
        <dbReference type="ChEBI" id="CHEBI:30616"/>
        <dbReference type="ChEBI" id="CHEBI:33019"/>
        <dbReference type="ChEBI" id="CHEBI:57472"/>
        <dbReference type="ChEBI" id="CHEBI:57743"/>
        <dbReference type="ChEBI" id="CHEBI:456215"/>
        <dbReference type="EC" id="6.3.4.5"/>
    </reaction>
</comment>
<comment type="pathway">
    <text>Amino-acid biosynthesis; L-arginine biosynthesis; L-arginine from L-ornithine and carbamoyl phosphate: step 2/3.</text>
</comment>
<comment type="subunit">
    <text evidence="1">Homotetramer.</text>
</comment>
<comment type="subcellular location">
    <subcellularLocation>
        <location evidence="1">Cytoplasm</location>
    </subcellularLocation>
</comment>
<comment type="similarity">
    <text evidence="2">Belongs to the argininosuccinate synthase family. Type 2 subfamily.</text>
</comment>
<reference key="1">
    <citation type="journal article" date="2002" name="Proc. Natl. Acad. Sci. U.S.A.">
        <title>Extensive mosaic structure revealed by the complete genome sequence of uropathogenic Escherichia coli.</title>
        <authorList>
            <person name="Welch R.A."/>
            <person name="Burland V."/>
            <person name="Plunkett G. III"/>
            <person name="Redford P."/>
            <person name="Roesch P."/>
            <person name="Rasko D."/>
            <person name="Buckles E.L."/>
            <person name="Liou S.-R."/>
            <person name="Boutin A."/>
            <person name="Hackett J."/>
            <person name="Stroud D."/>
            <person name="Mayhew G.F."/>
            <person name="Rose D.J."/>
            <person name="Zhou S."/>
            <person name="Schwartz D.C."/>
            <person name="Perna N.T."/>
            <person name="Mobley H.L.T."/>
            <person name="Donnenberg M.S."/>
            <person name="Blattner F.R."/>
        </authorList>
    </citation>
    <scope>NUCLEOTIDE SEQUENCE [LARGE SCALE GENOMIC DNA]</scope>
    <source>
        <strain>CFT073 / ATCC 700928 / UPEC</strain>
    </source>
</reference>
<organism>
    <name type="scientific">Escherichia coli O6:H1 (strain CFT073 / ATCC 700928 / UPEC)</name>
    <dbReference type="NCBI Taxonomy" id="199310"/>
    <lineage>
        <taxon>Bacteria</taxon>
        <taxon>Pseudomonadati</taxon>
        <taxon>Pseudomonadota</taxon>
        <taxon>Gammaproteobacteria</taxon>
        <taxon>Enterobacterales</taxon>
        <taxon>Enterobacteriaceae</taxon>
        <taxon>Escherichia</taxon>
    </lineage>
</organism>
<gene>
    <name type="primary">argG</name>
    <name type="ordered locus">c3929</name>
</gene>
<name>ASSY_ECOL6</name>
<protein>
    <recommendedName>
        <fullName>Argininosuccinate synthase</fullName>
        <ecNumber>6.3.4.5</ecNumber>
    </recommendedName>
    <alternativeName>
        <fullName>Citrulline--aspartate ligase</fullName>
    </alternativeName>
</protein>
<dbReference type="EC" id="6.3.4.5"/>
<dbReference type="EMBL" id="AE014075">
    <property type="protein sequence ID" value="AAN82370.1"/>
    <property type="molecule type" value="Genomic_DNA"/>
</dbReference>
<dbReference type="RefSeq" id="WP_000207680.1">
    <property type="nucleotide sequence ID" value="NZ_CP051263.1"/>
</dbReference>
<dbReference type="SMR" id="P0A6E5"/>
<dbReference type="STRING" id="199310.c3929"/>
<dbReference type="KEGG" id="ecc:c3929"/>
<dbReference type="eggNOG" id="COG0137">
    <property type="taxonomic scope" value="Bacteria"/>
</dbReference>
<dbReference type="HOGENOM" id="CLU_032784_4_1_6"/>
<dbReference type="BioCyc" id="ECOL199310:C3929-MONOMER"/>
<dbReference type="UniPathway" id="UPA00068">
    <property type="reaction ID" value="UER00113"/>
</dbReference>
<dbReference type="Proteomes" id="UP000001410">
    <property type="component" value="Chromosome"/>
</dbReference>
<dbReference type="GO" id="GO:0005737">
    <property type="term" value="C:cytoplasm"/>
    <property type="evidence" value="ECO:0007669"/>
    <property type="project" value="UniProtKB-SubCell"/>
</dbReference>
<dbReference type="GO" id="GO:0004055">
    <property type="term" value="F:argininosuccinate synthase activity"/>
    <property type="evidence" value="ECO:0007669"/>
    <property type="project" value="UniProtKB-UniRule"/>
</dbReference>
<dbReference type="GO" id="GO:0005524">
    <property type="term" value="F:ATP binding"/>
    <property type="evidence" value="ECO:0007669"/>
    <property type="project" value="UniProtKB-UniRule"/>
</dbReference>
<dbReference type="GO" id="GO:0042803">
    <property type="term" value="F:protein homodimerization activity"/>
    <property type="evidence" value="ECO:0007669"/>
    <property type="project" value="InterPro"/>
</dbReference>
<dbReference type="GO" id="GO:0000053">
    <property type="term" value="P:argininosuccinate metabolic process"/>
    <property type="evidence" value="ECO:0007669"/>
    <property type="project" value="TreeGrafter"/>
</dbReference>
<dbReference type="GO" id="GO:0006526">
    <property type="term" value="P:L-arginine biosynthetic process"/>
    <property type="evidence" value="ECO:0007669"/>
    <property type="project" value="UniProtKB-UniRule"/>
</dbReference>
<dbReference type="GO" id="GO:0000050">
    <property type="term" value="P:urea cycle"/>
    <property type="evidence" value="ECO:0007669"/>
    <property type="project" value="TreeGrafter"/>
</dbReference>
<dbReference type="CDD" id="cd01999">
    <property type="entry name" value="ASS"/>
    <property type="match status" value="1"/>
</dbReference>
<dbReference type="FunFam" id="1.10.287.400:FF:000001">
    <property type="entry name" value="Argininosuccinate synthase"/>
    <property type="match status" value="1"/>
</dbReference>
<dbReference type="Gene3D" id="1.10.287.400">
    <property type="match status" value="1"/>
</dbReference>
<dbReference type="Gene3D" id="3.90.1260.10">
    <property type="entry name" value="Argininosuccinate synthetase, chain A, domain 2"/>
    <property type="match status" value="1"/>
</dbReference>
<dbReference type="Gene3D" id="3.40.50.620">
    <property type="entry name" value="HUPs"/>
    <property type="match status" value="1"/>
</dbReference>
<dbReference type="HAMAP" id="MF_00581">
    <property type="entry name" value="Arg_succ_synth_type2"/>
    <property type="match status" value="1"/>
</dbReference>
<dbReference type="InterPro" id="IPR023437">
    <property type="entry name" value="Arg_succ_synth_type2_subfam"/>
</dbReference>
<dbReference type="InterPro" id="IPR048268">
    <property type="entry name" value="Arginosuc_syn_C"/>
</dbReference>
<dbReference type="InterPro" id="IPR048267">
    <property type="entry name" value="Arginosuc_syn_N"/>
</dbReference>
<dbReference type="InterPro" id="IPR001518">
    <property type="entry name" value="Arginosuc_synth"/>
</dbReference>
<dbReference type="InterPro" id="IPR018223">
    <property type="entry name" value="Arginosuc_synth_CS"/>
</dbReference>
<dbReference type="InterPro" id="IPR023434">
    <property type="entry name" value="Arginosuc_synth_type_1_subfam"/>
</dbReference>
<dbReference type="InterPro" id="IPR024074">
    <property type="entry name" value="AS_cat/multimer_dom_body"/>
</dbReference>
<dbReference type="InterPro" id="IPR024073">
    <property type="entry name" value="AS_multimer_C_tail"/>
</dbReference>
<dbReference type="InterPro" id="IPR014729">
    <property type="entry name" value="Rossmann-like_a/b/a_fold"/>
</dbReference>
<dbReference type="NCBIfam" id="TIGR00032">
    <property type="entry name" value="argG"/>
    <property type="match status" value="1"/>
</dbReference>
<dbReference type="NCBIfam" id="NF003779">
    <property type="entry name" value="PRK05370.1"/>
    <property type="match status" value="1"/>
</dbReference>
<dbReference type="PANTHER" id="PTHR11587">
    <property type="entry name" value="ARGININOSUCCINATE SYNTHASE"/>
    <property type="match status" value="1"/>
</dbReference>
<dbReference type="PANTHER" id="PTHR11587:SF2">
    <property type="entry name" value="ARGININOSUCCINATE SYNTHASE"/>
    <property type="match status" value="1"/>
</dbReference>
<dbReference type="Pfam" id="PF20979">
    <property type="entry name" value="Arginosuc_syn_C"/>
    <property type="match status" value="1"/>
</dbReference>
<dbReference type="Pfam" id="PF00764">
    <property type="entry name" value="Arginosuc_synth"/>
    <property type="match status" value="1"/>
</dbReference>
<dbReference type="SUPFAM" id="SSF52402">
    <property type="entry name" value="Adenine nucleotide alpha hydrolases-like"/>
    <property type="match status" value="1"/>
</dbReference>
<dbReference type="SUPFAM" id="SSF69864">
    <property type="entry name" value="Argininosuccinate synthetase, C-terminal domain"/>
    <property type="match status" value="1"/>
</dbReference>
<dbReference type="PROSITE" id="PS00564">
    <property type="entry name" value="ARGININOSUCCIN_SYN_1"/>
    <property type="match status" value="1"/>
</dbReference>
<dbReference type="PROSITE" id="PS00565">
    <property type="entry name" value="ARGININOSUCCIN_SYN_2"/>
    <property type="match status" value="1"/>
</dbReference>
<proteinExistence type="inferred from homology"/>
<sequence>MTTILKHLPVGQRIGIAFSGGLDTSAALLWMRQKGAVPYAYTANLGQPDEEDYDAIPRRAMEYGAENARLIDCRKQLVAEGIAAIQCGAFHNTTGGLTYFNTTPLGRAVTGTMLVAAMKEDGVNIWGDGSTYKGNDIERFYRYGLLTNAELQIYKPWLDTDFIDELGGRHEMSEFMIACGFDYKMSVEKAYSTDSNMLGATHEAKDLEYLNSSVKIVNPIMGVKFWDESVKIPAEEVTVRFEQGHPVALNGKTFSDDVEMMLEANRIGGRHGLGMSDQIENRIIEAKSRGIYEAPGMALLHIAYERLLTGIHNEDTIEQYHAHGRQLGRLLYQGRWFDSQALMLRDSLQRWVASQITGEVTLELRRGNDYSILNTVSENLTYKPERLTMEKGDSVFSPDDRIGQLTMRNLDITDTREKLFGYAKTGLLSSSAASGVPQVENLENKGQ</sequence>
<feature type="initiator methionine" description="Removed" evidence="1">
    <location>
        <position position="1"/>
    </location>
</feature>
<feature type="chain" id="PRO_0000148697" description="Argininosuccinate synthase">
    <location>
        <begin position="2"/>
        <end position="447"/>
    </location>
</feature>
<feature type="binding site" evidence="1">
    <location>
        <begin position="17"/>
        <end position="25"/>
    </location>
    <ligand>
        <name>ATP</name>
        <dbReference type="ChEBI" id="CHEBI:30616"/>
    </ligand>
</feature>
<feature type="binding site" evidence="1">
    <location>
        <position position="43"/>
    </location>
    <ligand>
        <name>ATP</name>
        <dbReference type="ChEBI" id="CHEBI:30616"/>
    </ligand>
</feature>
<feature type="binding site" evidence="1">
    <location>
        <position position="99"/>
    </location>
    <ligand>
        <name>L-citrulline</name>
        <dbReference type="ChEBI" id="CHEBI:57743"/>
    </ligand>
</feature>
<feature type="binding site" evidence="1">
    <location>
        <position position="129"/>
    </location>
    <ligand>
        <name>ATP</name>
        <dbReference type="ChEBI" id="CHEBI:30616"/>
    </ligand>
</feature>
<feature type="binding site" evidence="1">
    <location>
        <position position="131"/>
    </location>
    <ligand>
        <name>ATP</name>
        <dbReference type="ChEBI" id="CHEBI:30616"/>
    </ligand>
</feature>
<feature type="binding site" evidence="1">
    <location>
        <position position="131"/>
    </location>
    <ligand>
        <name>L-aspartate</name>
        <dbReference type="ChEBI" id="CHEBI:29991"/>
    </ligand>
</feature>
<feature type="binding site" evidence="1">
    <location>
        <position position="135"/>
    </location>
    <ligand>
        <name>L-aspartate</name>
        <dbReference type="ChEBI" id="CHEBI:29991"/>
    </ligand>
</feature>
<feature type="binding site" evidence="1">
    <location>
        <position position="135"/>
    </location>
    <ligand>
        <name>L-citrulline</name>
        <dbReference type="ChEBI" id="CHEBI:57743"/>
    </ligand>
</feature>
<feature type="binding site" evidence="1">
    <location>
        <position position="136"/>
    </location>
    <ligand>
        <name>ATP</name>
        <dbReference type="ChEBI" id="CHEBI:30616"/>
    </ligand>
</feature>
<feature type="binding site" evidence="1">
    <location>
        <position position="136"/>
    </location>
    <ligand>
        <name>L-aspartate</name>
        <dbReference type="ChEBI" id="CHEBI:29991"/>
    </ligand>
</feature>
<feature type="binding site" evidence="1">
    <location>
        <position position="139"/>
    </location>
    <ligand>
        <name>L-citrulline</name>
        <dbReference type="ChEBI" id="CHEBI:57743"/>
    </ligand>
</feature>
<feature type="binding site" evidence="1">
    <location>
        <position position="192"/>
    </location>
    <ligand>
        <name>L-citrulline</name>
        <dbReference type="ChEBI" id="CHEBI:57743"/>
    </ligand>
</feature>
<feature type="binding site" evidence="1">
    <location>
        <position position="194"/>
    </location>
    <ligand>
        <name>ATP</name>
        <dbReference type="ChEBI" id="CHEBI:30616"/>
    </ligand>
</feature>
<feature type="binding site" evidence="1">
    <location>
        <position position="201"/>
    </location>
    <ligand>
        <name>L-citrulline</name>
        <dbReference type="ChEBI" id="CHEBI:57743"/>
    </ligand>
</feature>
<feature type="binding site" evidence="1">
    <location>
        <position position="203"/>
    </location>
    <ligand>
        <name>L-citrulline</name>
        <dbReference type="ChEBI" id="CHEBI:57743"/>
    </ligand>
</feature>
<feature type="binding site" evidence="1">
    <location>
        <position position="280"/>
    </location>
    <ligand>
        <name>L-citrulline</name>
        <dbReference type="ChEBI" id="CHEBI:57743"/>
    </ligand>
</feature>